<gene>
    <name evidence="1" type="primary">ycfP</name>
    <name type="ordered locus">SFV_1128</name>
</gene>
<name>YCFP_SHIF8</name>
<proteinExistence type="inferred from homology"/>
<comment type="similarity">
    <text evidence="1">Belongs to the UPF0227 family.</text>
</comment>
<dbReference type="EMBL" id="CP000266">
    <property type="protein sequence ID" value="ABF03337.1"/>
    <property type="molecule type" value="Genomic_DNA"/>
</dbReference>
<dbReference type="RefSeq" id="WP_000587933.1">
    <property type="nucleotide sequence ID" value="NC_008258.1"/>
</dbReference>
<dbReference type="SMR" id="Q0T5S8"/>
<dbReference type="ESTHER" id="shifl-ycfp">
    <property type="family name" value="abh_upf00227"/>
</dbReference>
<dbReference type="GeneID" id="93776300"/>
<dbReference type="KEGG" id="sfv:SFV_1128"/>
<dbReference type="HOGENOM" id="CLU_128769_0_0_6"/>
<dbReference type="Proteomes" id="UP000000659">
    <property type="component" value="Chromosome"/>
</dbReference>
<dbReference type="FunFam" id="3.40.50.1820:FF:000007">
    <property type="entry name" value="UPF0227 protein YcfP"/>
    <property type="match status" value="1"/>
</dbReference>
<dbReference type="Gene3D" id="3.40.50.1820">
    <property type="entry name" value="alpha/beta hydrolase"/>
    <property type="match status" value="1"/>
</dbReference>
<dbReference type="HAMAP" id="MF_01047">
    <property type="entry name" value="UPF0227"/>
    <property type="match status" value="1"/>
</dbReference>
<dbReference type="InterPro" id="IPR029058">
    <property type="entry name" value="AB_hydrolase_fold"/>
</dbReference>
<dbReference type="InterPro" id="IPR022987">
    <property type="entry name" value="UPF0227"/>
</dbReference>
<dbReference type="InterPro" id="IPR008886">
    <property type="entry name" value="UPF0227/Esterase_YqiA"/>
</dbReference>
<dbReference type="NCBIfam" id="NF003431">
    <property type="entry name" value="PRK04940.1"/>
    <property type="match status" value="1"/>
</dbReference>
<dbReference type="PANTHER" id="PTHR35602">
    <property type="entry name" value="ESTERASE YQIA-RELATED"/>
    <property type="match status" value="1"/>
</dbReference>
<dbReference type="PANTHER" id="PTHR35602:SF2">
    <property type="entry name" value="UPF0227 PROTEIN YCFP"/>
    <property type="match status" value="1"/>
</dbReference>
<dbReference type="Pfam" id="PF05728">
    <property type="entry name" value="UPF0227"/>
    <property type="match status" value="1"/>
</dbReference>
<dbReference type="SUPFAM" id="SSF53474">
    <property type="entry name" value="alpha/beta-Hydrolases"/>
    <property type="match status" value="1"/>
</dbReference>
<accession>Q0T5S8</accession>
<feature type="chain" id="PRO_1000064302" description="UPF0227 protein YcfP">
    <location>
        <begin position="1"/>
        <end position="180"/>
    </location>
</feature>
<reference key="1">
    <citation type="journal article" date="2006" name="BMC Genomics">
        <title>Complete genome sequence of Shigella flexneri 5b and comparison with Shigella flexneri 2a.</title>
        <authorList>
            <person name="Nie H."/>
            <person name="Yang F."/>
            <person name="Zhang X."/>
            <person name="Yang J."/>
            <person name="Chen L."/>
            <person name="Wang J."/>
            <person name="Xiong Z."/>
            <person name="Peng J."/>
            <person name="Sun L."/>
            <person name="Dong J."/>
            <person name="Xue Y."/>
            <person name="Xu X."/>
            <person name="Chen S."/>
            <person name="Yao Z."/>
            <person name="Shen Y."/>
            <person name="Jin Q."/>
        </authorList>
    </citation>
    <scope>NUCLEOTIDE SEQUENCE [LARGE SCALE GENOMIC DNA]</scope>
    <source>
        <strain>8401</strain>
    </source>
</reference>
<protein>
    <recommendedName>
        <fullName evidence="1">UPF0227 protein YcfP</fullName>
    </recommendedName>
</protein>
<sequence>MIIYLHGFDSNSPGNHEKVLQLQFIDPDVRLISYSTRHPKHDMQHLLKEVDKMLQLNVDERPLICGVGLGGYWAERIGFLCDIRQVIFNPNLFPYENMEGKIDRPEEYADIATKCVTNFREKNRDRCLVILSRNDEALNSQRTSEELHHYYEIVWDEEQTHKFKNISPHLQRIKAFKTLG</sequence>
<evidence type="ECO:0000255" key="1">
    <source>
        <dbReference type="HAMAP-Rule" id="MF_01047"/>
    </source>
</evidence>
<organism>
    <name type="scientific">Shigella flexneri serotype 5b (strain 8401)</name>
    <dbReference type="NCBI Taxonomy" id="373384"/>
    <lineage>
        <taxon>Bacteria</taxon>
        <taxon>Pseudomonadati</taxon>
        <taxon>Pseudomonadota</taxon>
        <taxon>Gammaproteobacteria</taxon>
        <taxon>Enterobacterales</taxon>
        <taxon>Enterobacteriaceae</taxon>
        <taxon>Shigella</taxon>
    </lineage>
</organism>